<feature type="chain" id="PRO_0000411562" description="Ribosomal RNA small subunit methyltransferase G">
    <location>
        <begin position="1"/>
        <end position="237"/>
    </location>
</feature>
<feature type="binding site" evidence="1">
    <location>
        <position position="78"/>
    </location>
    <ligand>
        <name>S-adenosyl-L-methionine</name>
        <dbReference type="ChEBI" id="CHEBI:59789"/>
    </ligand>
</feature>
<feature type="binding site" evidence="1">
    <location>
        <position position="83"/>
    </location>
    <ligand>
        <name>S-adenosyl-L-methionine</name>
        <dbReference type="ChEBI" id="CHEBI:59789"/>
    </ligand>
</feature>
<feature type="binding site" evidence="1">
    <location>
        <begin position="129"/>
        <end position="130"/>
    </location>
    <ligand>
        <name>S-adenosyl-L-methionine</name>
        <dbReference type="ChEBI" id="CHEBI:59789"/>
    </ligand>
</feature>
<feature type="binding site" evidence="1">
    <location>
        <position position="148"/>
    </location>
    <ligand>
        <name>S-adenosyl-L-methionine</name>
        <dbReference type="ChEBI" id="CHEBI:59789"/>
    </ligand>
</feature>
<accession>P0DF45</accession>
<accession>Q8K8K3</accession>
<sequence length="237" mass="26806">MTPQDFYRTLEEDGFSLSSKQKEQFDTYFKLLVEWNTKINLTAITEENEVYLKHFYDSIAPILQGFLANEPIKLLDIGAGAGFPSLPMKILFPNLEVTIIDSLNKRISFLTLLAQELGLENVHFFHGRAEDFGQDKAFRGQFDVVTARAVARMQVLSELTIPFLKIGGKLIALKAQAADQELEEAKNALCLLFGKVIKNHSYQLPNGDSRFITIVEKKKETPNKYPRKAGLPNKKPL</sequence>
<evidence type="ECO:0000255" key="1">
    <source>
        <dbReference type="HAMAP-Rule" id="MF_00074"/>
    </source>
</evidence>
<dbReference type="EC" id="2.1.1.-" evidence="1"/>
<dbReference type="EMBL" id="BA000034">
    <property type="protein sequence ID" value="BAC64714.1"/>
    <property type="molecule type" value="Genomic_DNA"/>
</dbReference>
<dbReference type="RefSeq" id="WP_011054198.1">
    <property type="nucleotide sequence ID" value="NC_004606.1"/>
</dbReference>
<dbReference type="SMR" id="P0DF45"/>
<dbReference type="KEGG" id="sps:SPs1619"/>
<dbReference type="HOGENOM" id="CLU_065341_0_2_9"/>
<dbReference type="GO" id="GO:0005829">
    <property type="term" value="C:cytosol"/>
    <property type="evidence" value="ECO:0007669"/>
    <property type="project" value="TreeGrafter"/>
</dbReference>
<dbReference type="GO" id="GO:0070043">
    <property type="term" value="F:rRNA (guanine-N7-)-methyltransferase activity"/>
    <property type="evidence" value="ECO:0007669"/>
    <property type="project" value="UniProtKB-UniRule"/>
</dbReference>
<dbReference type="CDD" id="cd02440">
    <property type="entry name" value="AdoMet_MTases"/>
    <property type="match status" value="1"/>
</dbReference>
<dbReference type="FunFam" id="3.40.50.150:FF:000041">
    <property type="entry name" value="Ribosomal RNA small subunit methyltransferase G"/>
    <property type="match status" value="1"/>
</dbReference>
<dbReference type="Gene3D" id="3.40.50.150">
    <property type="entry name" value="Vaccinia Virus protein VP39"/>
    <property type="match status" value="1"/>
</dbReference>
<dbReference type="HAMAP" id="MF_00074">
    <property type="entry name" value="16SrRNA_methyltr_G"/>
    <property type="match status" value="1"/>
</dbReference>
<dbReference type="InterPro" id="IPR003682">
    <property type="entry name" value="rRNA_ssu_MeTfrase_G"/>
</dbReference>
<dbReference type="InterPro" id="IPR029063">
    <property type="entry name" value="SAM-dependent_MTases_sf"/>
</dbReference>
<dbReference type="NCBIfam" id="TIGR00138">
    <property type="entry name" value="rsmG_gidB"/>
    <property type="match status" value="1"/>
</dbReference>
<dbReference type="PANTHER" id="PTHR31760">
    <property type="entry name" value="S-ADENOSYL-L-METHIONINE-DEPENDENT METHYLTRANSFERASES SUPERFAMILY PROTEIN"/>
    <property type="match status" value="1"/>
</dbReference>
<dbReference type="PANTHER" id="PTHR31760:SF0">
    <property type="entry name" value="S-ADENOSYL-L-METHIONINE-DEPENDENT METHYLTRANSFERASES SUPERFAMILY PROTEIN"/>
    <property type="match status" value="1"/>
</dbReference>
<dbReference type="Pfam" id="PF02527">
    <property type="entry name" value="GidB"/>
    <property type="match status" value="1"/>
</dbReference>
<dbReference type="PIRSF" id="PIRSF003078">
    <property type="entry name" value="GidB"/>
    <property type="match status" value="1"/>
</dbReference>
<dbReference type="SUPFAM" id="SSF53335">
    <property type="entry name" value="S-adenosyl-L-methionine-dependent methyltransferases"/>
    <property type="match status" value="1"/>
</dbReference>
<gene>
    <name evidence="1" type="primary">rsmG</name>
    <name type="ordered locus">SPs1619</name>
</gene>
<organism>
    <name type="scientific">Streptococcus pyogenes serotype M3 (strain SSI-1)</name>
    <dbReference type="NCBI Taxonomy" id="193567"/>
    <lineage>
        <taxon>Bacteria</taxon>
        <taxon>Bacillati</taxon>
        <taxon>Bacillota</taxon>
        <taxon>Bacilli</taxon>
        <taxon>Lactobacillales</taxon>
        <taxon>Streptococcaceae</taxon>
        <taxon>Streptococcus</taxon>
    </lineage>
</organism>
<reference key="1">
    <citation type="journal article" date="2003" name="Genome Res.">
        <title>Genome sequence of an M3 strain of Streptococcus pyogenes reveals a large-scale genomic rearrangement in invasive strains and new insights into phage evolution.</title>
        <authorList>
            <person name="Nakagawa I."/>
            <person name="Kurokawa K."/>
            <person name="Yamashita A."/>
            <person name="Nakata M."/>
            <person name="Tomiyasu Y."/>
            <person name="Okahashi N."/>
            <person name="Kawabata S."/>
            <person name="Yamazaki K."/>
            <person name="Shiba T."/>
            <person name="Yasunaga T."/>
            <person name="Hayashi H."/>
            <person name="Hattori M."/>
            <person name="Hamada S."/>
        </authorList>
    </citation>
    <scope>NUCLEOTIDE SEQUENCE [LARGE SCALE GENOMIC DNA]</scope>
    <source>
        <strain>SSI-1</strain>
    </source>
</reference>
<protein>
    <recommendedName>
        <fullName evidence="1">Ribosomal RNA small subunit methyltransferase G</fullName>
        <ecNumber evidence="1">2.1.1.-</ecNumber>
    </recommendedName>
    <alternativeName>
        <fullName evidence="1">16S rRNA 7-methylguanosine methyltransferase</fullName>
        <shortName evidence="1">16S rRNA m7G methyltransferase</shortName>
    </alternativeName>
</protein>
<proteinExistence type="inferred from homology"/>
<comment type="function">
    <text evidence="1">Specifically methylates the N7 position of a guanine in 16S rRNA.</text>
</comment>
<comment type="subcellular location">
    <subcellularLocation>
        <location evidence="1">Cytoplasm</location>
    </subcellularLocation>
</comment>
<comment type="similarity">
    <text evidence="1">Belongs to the methyltransferase superfamily. RNA methyltransferase RsmG family.</text>
</comment>
<keyword id="KW-0963">Cytoplasm</keyword>
<keyword id="KW-0489">Methyltransferase</keyword>
<keyword id="KW-0698">rRNA processing</keyword>
<keyword id="KW-0949">S-adenosyl-L-methionine</keyword>
<keyword id="KW-0808">Transferase</keyword>
<name>RSMG_STRPQ</name>